<name>FAHD2_MESAU</name>
<comment type="function">
    <text evidence="1">May have hydrolase activity.</text>
</comment>
<comment type="cofactor">
    <cofactor evidence="1 3">
        <name>Ca(2+)</name>
        <dbReference type="ChEBI" id="CHEBI:29108"/>
    </cofactor>
</comment>
<comment type="cofactor">
    <cofactor evidence="1 3">
        <name>Mg(2+)</name>
        <dbReference type="ChEBI" id="CHEBI:18420"/>
    </cofactor>
</comment>
<comment type="similarity">
    <text evidence="2">Belongs to the FAH family.</text>
</comment>
<evidence type="ECO:0000250" key="1">
    <source>
        <dbReference type="UniProtKB" id="Q3TC72"/>
    </source>
</evidence>
<evidence type="ECO:0000255" key="2"/>
<evidence type="ECO:0000305" key="3"/>
<keyword id="KW-0106">Calcium</keyword>
<keyword id="KW-0378">Hydrolase</keyword>
<keyword id="KW-0460">Magnesium</keyword>
<keyword id="KW-0479">Metal-binding</keyword>
<keyword id="KW-1185">Reference proteome</keyword>
<sequence>RALATQLPVIPRSQVTFLAPVTRPEK</sequence>
<proteinExistence type="evidence at protein level"/>
<protein>
    <recommendedName>
        <fullName evidence="1">Fumarylacetoacetate hydrolase domain-containing protein 2A</fullName>
        <ecNumber>3.-.-.-</ecNumber>
    </recommendedName>
</protein>
<feature type="chain" id="PRO_0000394414" description="Fumarylacetoacetate hydrolase domain-containing protein 2A">
    <location>
        <begin position="1" status="less than"/>
        <end position="26" status="greater than"/>
    </location>
</feature>
<feature type="non-terminal residue">
    <location>
        <position position="1"/>
    </location>
</feature>
<feature type="non-terminal residue">
    <location>
        <position position="26"/>
    </location>
</feature>
<reference key="1">
    <citation type="journal article" date="2010" name="Asian J. Androl.">
        <title>Glucose-regulated protein precursor (GRP78) and tumor rejection antigen (GP96) are unique to hamster caput epididymal spermatozoa.</title>
        <authorList>
            <person name="Kameshwari D.B."/>
            <person name="Bhande S."/>
            <person name="Sundaram C.S."/>
            <person name="Kota V."/>
            <person name="Siva A.B."/>
            <person name="Shivaji S."/>
        </authorList>
    </citation>
    <scope>IDENTIFICATION BY MASS SPECTROMETRY</scope>
</reference>
<dbReference type="EC" id="3.-.-.-"/>
<dbReference type="STRING" id="10036.ENSMAUP00000005957"/>
<dbReference type="eggNOG" id="KOG1535">
    <property type="taxonomic scope" value="Eukaryota"/>
</dbReference>
<dbReference type="Proteomes" id="UP000189706">
    <property type="component" value="Unplaced"/>
</dbReference>
<dbReference type="GO" id="GO:0016787">
    <property type="term" value="F:hydrolase activity"/>
    <property type="evidence" value="ECO:0007669"/>
    <property type="project" value="UniProtKB-KW"/>
</dbReference>
<dbReference type="GO" id="GO:0046872">
    <property type="term" value="F:metal ion binding"/>
    <property type="evidence" value="ECO:0007669"/>
    <property type="project" value="UniProtKB-KW"/>
</dbReference>
<organism>
    <name type="scientific">Mesocricetus auratus</name>
    <name type="common">Golden hamster</name>
    <dbReference type="NCBI Taxonomy" id="10036"/>
    <lineage>
        <taxon>Eukaryota</taxon>
        <taxon>Metazoa</taxon>
        <taxon>Chordata</taxon>
        <taxon>Craniata</taxon>
        <taxon>Vertebrata</taxon>
        <taxon>Euteleostomi</taxon>
        <taxon>Mammalia</taxon>
        <taxon>Eutheria</taxon>
        <taxon>Euarchontoglires</taxon>
        <taxon>Glires</taxon>
        <taxon>Rodentia</taxon>
        <taxon>Myomorpha</taxon>
        <taxon>Muroidea</taxon>
        <taxon>Cricetidae</taxon>
        <taxon>Cricetinae</taxon>
        <taxon>Mesocricetus</taxon>
    </lineage>
</organism>
<gene>
    <name evidence="1" type="primary">FAHD2</name>
</gene>
<accession>P86240</accession>